<sequence length="385" mass="43271">MELQEVLHMNGGEGDASYAKNSSFNQLVLAKVKPVLEQCVGELLRANLPNINKCIKVADLGCASGPNTLLTVRDIVQSIDKVRQEMKNELERPTIQVFLTDLFQNDFNSVFMLLPSFYRKLEKENGRKIGSCLIAAMPGSFHGRLFPEESMHFLHSSYSLQFLSQVPSGLVTELGITANKRSIYSSKASPPPVQKAYLDQFTKDFTTFLRIRSEELLSRGRMLLTCICKGDEFDGPNTMDLLEMAINDLVVEGHLEEEKLDSFNVPIYAASVEELKCIVEEEGSFEILYLETFKLRYDAGFSIDDDCQVRSHSPEYSDEHARAAHVASLLRSVYEPILANHFGEAIIPDIFHRFATNAAKVIRLGKGFYNNLIISLAKKPEKSDI</sequence>
<reference key="1">
    <citation type="journal article" date="2001" name="J. Biol. Chem.">
        <title>7-Methylxanthine methyltransferase of coffee plants. Gene isolation and enzymatic properties.</title>
        <authorList>
            <person name="Ogawa M."/>
            <person name="Herai Y."/>
            <person name="Koizumi N."/>
            <person name="Kusano T."/>
            <person name="Sano H."/>
        </authorList>
    </citation>
    <scope>NUCLEOTIDE SEQUENCE [MRNA]</scope>
    <scope>TISSUE SPECIFICITY</scope>
    <source>
        <strain>cv. Caturra</strain>
    </source>
</reference>
<reference key="2">
    <citation type="journal article" date="2003" name="FEBS Lett.">
        <title>Isolation of a new dual-functional caffeine synthase gene encoding an enzyme for the conversion of 7-methylxanthine to caffeine from coffee (Coffea arabica L.).</title>
        <authorList>
            <person name="Mizuno K."/>
            <person name="Okuda A."/>
            <person name="Kato M."/>
            <person name="Yoneyama N."/>
            <person name="Tanaka H."/>
            <person name="Ashihara H."/>
            <person name="Fujimura T."/>
        </authorList>
    </citation>
    <scope>NUCLEOTIDE SEQUENCE [MRNA]</scope>
</reference>
<reference key="3">
    <citation type="journal article" date="2015" name="Planta">
        <title>Differential regulation of caffeine metabolism in Coffea arabica (Arabica) and Coffea canephora (Robusta).</title>
        <authorList>
            <person name="Perrois C."/>
            <person name="Strickler S.R."/>
            <person name="Mathieu G."/>
            <person name="Lepelley M."/>
            <person name="Bedon L."/>
            <person name="Michaux S."/>
            <person name="Husson J."/>
            <person name="Mueller L."/>
            <person name="Privat I."/>
        </authorList>
    </citation>
    <scope>NUCLEOTIDE SEQUENCE [MRNA]</scope>
    <scope>GENE FAMILY</scope>
    <scope>NOMENCLATURE</scope>
    <source>
        <strain>cv. ET39</strain>
    </source>
</reference>
<evidence type="ECO:0000250" key="1">
    <source>
        <dbReference type="UniProtKB" id="A4GE70"/>
    </source>
</evidence>
<evidence type="ECO:0000250" key="2">
    <source>
        <dbReference type="UniProtKB" id="Q8H0D2"/>
    </source>
</evidence>
<evidence type="ECO:0000250" key="3">
    <source>
        <dbReference type="UniProtKB" id="Q9FLN8"/>
    </source>
</evidence>
<evidence type="ECO:0000250" key="4">
    <source>
        <dbReference type="UniProtKB" id="Q9FZN8"/>
    </source>
</evidence>
<evidence type="ECO:0000269" key="5">
    <source>
    </source>
</evidence>
<evidence type="ECO:0000303" key="6">
    <source>
    </source>
</evidence>
<evidence type="ECO:0000303" key="7">
    <source>
    </source>
</evidence>
<evidence type="ECO:0000303" key="8">
    <source>
    </source>
</evidence>
<evidence type="ECO:0000305" key="9"/>
<name>CS3_COFAR</name>
<gene>
    <name evidence="7" type="primary">CS3</name>
    <name evidence="6 8" type="synonym">MTL2</name>
</gene>
<keyword id="KW-0017">Alkaloid metabolism</keyword>
<keyword id="KW-0460">Magnesium</keyword>
<keyword id="KW-0479">Metal-binding</keyword>
<keyword id="KW-0489">Methyltransferase</keyword>
<keyword id="KW-1185">Reference proteome</keyword>
<keyword id="KW-0949">S-adenosyl-L-methionine</keyword>
<keyword id="KW-0808">Transferase</keyword>
<proteinExistence type="evidence at transcript level"/>
<accession>Q9AVK1</accession>
<accession>A0A096VHZ3</accession>
<accession>Q8H0F9</accession>
<dbReference type="EC" id="2.1.1.-" evidence="2"/>
<dbReference type="EMBL" id="AB048792">
    <property type="protein sequence ID" value="BAB39214.1"/>
    <property type="molecule type" value="mRNA"/>
</dbReference>
<dbReference type="EMBL" id="AB054842">
    <property type="protein sequence ID" value="BAC43758.1"/>
    <property type="molecule type" value="mRNA"/>
</dbReference>
<dbReference type="EMBL" id="JX978527">
    <property type="protein sequence ID" value="AFV60455.1"/>
    <property type="molecule type" value="mRNA"/>
</dbReference>
<dbReference type="SMR" id="Q9AVK1"/>
<dbReference type="OrthoDB" id="1523883at2759"/>
<dbReference type="BRENDA" id="2.1.1.159">
    <property type="organism ID" value="1559"/>
</dbReference>
<dbReference type="Proteomes" id="UP000515148">
    <property type="component" value="Unplaced"/>
</dbReference>
<dbReference type="GO" id="GO:0046872">
    <property type="term" value="F:metal ion binding"/>
    <property type="evidence" value="ECO:0007669"/>
    <property type="project" value="UniProtKB-KW"/>
</dbReference>
<dbReference type="GO" id="GO:0008168">
    <property type="term" value="F:methyltransferase activity"/>
    <property type="evidence" value="ECO:0007669"/>
    <property type="project" value="UniProtKB-KW"/>
</dbReference>
<dbReference type="GO" id="GO:0009820">
    <property type="term" value="P:alkaloid metabolic process"/>
    <property type="evidence" value="ECO:0007669"/>
    <property type="project" value="UniProtKB-KW"/>
</dbReference>
<dbReference type="GO" id="GO:0032259">
    <property type="term" value="P:methylation"/>
    <property type="evidence" value="ECO:0007669"/>
    <property type="project" value="UniProtKB-KW"/>
</dbReference>
<dbReference type="Gene3D" id="1.10.1200.270">
    <property type="entry name" value="Methyltransferase, alpha-helical capping domain"/>
    <property type="match status" value="1"/>
</dbReference>
<dbReference type="Gene3D" id="3.40.50.150">
    <property type="entry name" value="Vaccinia Virus protein VP39"/>
    <property type="match status" value="1"/>
</dbReference>
<dbReference type="InterPro" id="IPR005299">
    <property type="entry name" value="MeTrfase_7"/>
</dbReference>
<dbReference type="InterPro" id="IPR042086">
    <property type="entry name" value="MeTrfase_capping"/>
</dbReference>
<dbReference type="InterPro" id="IPR029063">
    <property type="entry name" value="SAM-dependent_MTases_sf"/>
</dbReference>
<dbReference type="PANTHER" id="PTHR31009">
    <property type="entry name" value="S-ADENOSYL-L-METHIONINE:CARBOXYL METHYLTRANSFERASE FAMILY PROTEIN"/>
    <property type="match status" value="1"/>
</dbReference>
<dbReference type="Pfam" id="PF03492">
    <property type="entry name" value="Methyltransf_7"/>
    <property type="match status" value="1"/>
</dbReference>
<dbReference type="SUPFAM" id="SSF53335">
    <property type="entry name" value="S-adenosyl-L-methionine-dependent methyltransferases"/>
    <property type="match status" value="1"/>
</dbReference>
<feature type="chain" id="PRO_0000408307" description="Probable caffeine synthase 3">
    <location>
        <begin position="1"/>
        <end position="385"/>
    </location>
</feature>
<feature type="binding site" evidence="1">
    <location>
        <position position="18"/>
    </location>
    <ligand>
        <name>S-adenosyl-L-homocysteine</name>
        <dbReference type="ChEBI" id="CHEBI:57856"/>
    </ligand>
</feature>
<feature type="binding site" evidence="1">
    <location>
        <position position="62"/>
    </location>
    <ligand>
        <name>S-adenosyl-L-homocysteine</name>
        <dbReference type="ChEBI" id="CHEBI:57856"/>
    </ligand>
</feature>
<feature type="binding site" evidence="1">
    <location>
        <position position="67"/>
    </location>
    <ligand>
        <name>S-adenosyl-L-homocysteine</name>
        <dbReference type="ChEBI" id="CHEBI:57856"/>
    </ligand>
</feature>
<feature type="binding site" evidence="1">
    <location>
        <position position="101"/>
    </location>
    <ligand>
        <name>S-adenosyl-L-homocysteine</name>
        <dbReference type="ChEBI" id="CHEBI:57856"/>
    </ligand>
</feature>
<feature type="binding site" evidence="1">
    <location>
        <position position="102"/>
    </location>
    <ligand>
        <name>S-adenosyl-L-homocysteine</name>
        <dbReference type="ChEBI" id="CHEBI:57856"/>
    </ligand>
</feature>
<feature type="binding site" evidence="1">
    <location>
        <position position="140"/>
    </location>
    <ligand>
        <name>S-adenosyl-L-homocysteine</name>
        <dbReference type="ChEBI" id="CHEBI:57856"/>
    </ligand>
</feature>
<feature type="binding site" evidence="1">
    <location>
        <position position="141"/>
    </location>
    <ligand>
        <name>S-adenosyl-L-homocysteine</name>
        <dbReference type="ChEBI" id="CHEBI:57856"/>
    </ligand>
</feature>
<feature type="binding site" evidence="1">
    <location>
        <position position="158"/>
    </location>
    <ligand>
        <name>caffeine</name>
        <dbReference type="ChEBI" id="CHEBI:27732"/>
    </ligand>
</feature>
<feature type="binding site" evidence="1">
    <location>
        <position position="161"/>
    </location>
    <ligand>
        <name>caffeine</name>
        <dbReference type="ChEBI" id="CHEBI:27732"/>
    </ligand>
</feature>
<feature type="binding site" evidence="1">
    <location>
        <position position="162"/>
    </location>
    <ligand>
        <name>caffeine</name>
        <dbReference type="ChEBI" id="CHEBI:27732"/>
    </ligand>
</feature>
<feature type="binding site" evidence="3">
    <location>
        <position position="179"/>
    </location>
    <ligand>
        <name>Mg(2+)</name>
        <dbReference type="ChEBI" id="CHEBI:18420"/>
    </ligand>
</feature>
<feature type="binding site" evidence="1">
    <location>
        <position position="238"/>
    </location>
    <ligand>
        <name>caffeine</name>
        <dbReference type="ChEBI" id="CHEBI:27732"/>
    </ligand>
</feature>
<feature type="binding site" evidence="3">
    <location>
        <position position="261"/>
    </location>
    <ligand>
        <name>Mg(2+)</name>
        <dbReference type="ChEBI" id="CHEBI:18420"/>
    </ligand>
</feature>
<feature type="binding site" evidence="3">
    <location>
        <position position="263"/>
    </location>
    <ligand>
        <name>Mg(2+)</name>
        <dbReference type="ChEBI" id="CHEBI:18420"/>
    </ligand>
</feature>
<feature type="binding site" evidence="3">
    <location>
        <position position="264"/>
    </location>
    <ligand>
        <name>Mg(2+)</name>
        <dbReference type="ChEBI" id="CHEBI:18420"/>
    </ligand>
</feature>
<feature type="binding site" evidence="1">
    <location>
        <position position="369"/>
    </location>
    <ligand>
        <name>caffeine</name>
        <dbReference type="ChEBI" id="CHEBI:27732"/>
    </ligand>
</feature>
<feature type="site" description="Involved in substrate discrimination" evidence="4">
    <location>
        <position position="155"/>
    </location>
</feature>
<feature type="site" description="Involved in substrate discrimination" evidence="4">
    <location>
        <position position="267"/>
    </location>
</feature>
<feature type="site" description="Involved in substrate discrimination" evidence="4">
    <location>
        <position position="344"/>
    </location>
</feature>
<feature type="sequence conflict" description="In Ref. 2; BAC43758." evidence="9" ref="2">
    <original>Y</original>
    <variation>N</variation>
    <location>
        <position position="197"/>
    </location>
</feature>
<feature type="sequence conflict" description="In Ref. 3; AFV60455." evidence="9" ref="3">
    <original>A</original>
    <variation>P</variation>
    <location>
        <position position="339"/>
    </location>
</feature>
<feature type="sequence conflict" description="In Ref. 3; AFV60455." evidence="9" ref="3">
    <original>I</original>
    <variation>V</variation>
    <location>
        <position position="385"/>
    </location>
</feature>
<protein>
    <recommendedName>
        <fullName evidence="7">Probable caffeine synthase 3</fullName>
        <shortName evidence="7">CtCS3</shortName>
        <ecNumber evidence="2">2.1.1.-</ecNumber>
    </recommendedName>
    <alternativeName>
        <fullName evidence="6 8">Methyltransferase-like 2</fullName>
        <shortName evidence="6 8">CaMTL2</shortName>
    </alternativeName>
    <alternativeName>
        <fullName evidence="8">Methyltransferase-like protein</fullName>
    </alternativeName>
</protein>
<comment type="function">
    <text evidence="2">May be involved in the biosynthesis of caffeine.</text>
</comment>
<comment type="cofactor">
    <cofactor evidence="3">
        <name>Mg(2+)</name>
        <dbReference type="ChEBI" id="CHEBI:18420"/>
    </cofactor>
    <text evidence="3">Binds 1 Mg(2+) ion per subunit.</text>
</comment>
<comment type="pathway">
    <text evidence="2">Alkaloid biosynthesis.</text>
</comment>
<comment type="tissue specificity">
    <text evidence="5">Expressed in roots, stems, young and old leaves.</text>
</comment>
<comment type="similarity">
    <text evidence="9">Belongs to the methyltransferase superfamily. Type-7 methyltransferase family.</text>
</comment>
<organism>
    <name type="scientific">Coffea arabica</name>
    <name type="common">Arabian coffee</name>
    <dbReference type="NCBI Taxonomy" id="13443"/>
    <lineage>
        <taxon>Eukaryota</taxon>
        <taxon>Viridiplantae</taxon>
        <taxon>Streptophyta</taxon>
        <taxon>Embryophyta</taxon>
        <taxon>Tracheophyta</taxon>
        <taxon>Spermatophyta</taxon>
        <taxon>Magnoliopsida</taxon>
        <taxon>eudicotyledons</taxon>
        <taxon>Gunneridae</taxon>
        <taxon>Pentapetalae</taxon>
        <taxon>asterids</taxon>
        <taxon>lamiids</taxon>
        <taxon>Gentianales</taxon>
        <taxon>Rubiaceae</taxon>
        <taxon>Ixoroideae</taxon>
        <taxon>Gardenieae complex</taxon>
        <taxon>Bertiereae - Coffeeae clade</taxon>
        <taxon>Coffeeae</taxon>
        <taxon>Coffea</taxon>
    </lineage>
</organism>